<sequence length="213" mass="23783">MRSKYIVIEGLEGAGKTTARNVVVETLEQLGIRDMVFTREPGGTQLAEKLRSLVLDIKSVGDEVITDKAEVLMFYAARVQLVETVIKPALANGTWVIGDRHDLSTQAYQGGGRGIDQHMLATLRDAVLGDFRPDLTLYLDVTPEVGLKRARARGELDRIEQESFDFFNRTRARYLELAAQDKSIHTIDATQPLEAVMDAIRTTVTHWVKELDA</sequence>
<keyword id="KW-0067">ATP-binding</keyword>
<keyword id="KW-0418">Kinase</keyword>
<keyword id="KW-0545">Nucleotide biosynthesis</keyword>
<keyword id="KW-0547">Nucleotide-binding</keyword>
<keyword id="KW-0808">Transferase</keyword>
<comment type="function">
    <text evidence="1">Phosphorylation of dTMP to form dTDP in both de novo and salvage pathways of dTTP synthesis.</text>
</comment>
<comment type="catalytic activity">
    <reaction evidence="1">
        <text>dTMP + ATP = dTDP + ADP</text>
        <dbReference type="Rhea" id="RHEA:13517"/>
        <dbReference type="ChEBI" id="CHEBI:30616"/>
        <dbReference type="ChEBI" id="CHEBI:58369"/>
        <dbReference type="ChEBI" id="CHEBI:63528"/>
        <dbReference type="ChEBI" id="CHEBI:456216"/>
        <dbReference type="EC" id="2.7.4.9"/>
    </reaction>
</comment>
<comment type="similarity">
    <text evidence="1">Belongs to the thymidylate kinase family.</text>
</comment>
<protein>
    <recommendedName>
        <fullName evidence="1">Thymidylate kinase</fullName>
        <ecNumber evidence="1">2.7.4.9</ecNumber>
    </recommendedName>
    <alternativeName>
        <fullName evidence="1">dTMP kinase</fullName>
    </alternativeName>
</protein>
<organism>
    <name type="scientific">Escherichia coli (strain SE11)</name>
    <dbReference type="NCBI Taxonomy" id="409438"/>
    <lineage>
        <taxon>Bacteria</taxon>
        <taxon>Pseudomonadati</taxon>
        <taxon>Pseudomonadota</taxon>
        <taxon>Gammaproteobacteria</taxon>
        <taxon>Enterobacterales</taxon>
        <taxon>Enterobacteriaceae</taxon>
        <taxon>Escherichia</taxon>
    </lineage>
</organism>
<feature type="chain" id="PRO_1000097392" description="Thymidylate kinase">
    <location>
        <begin position="1"/>
        <end position="213"/>
    </location>
</feature>
<feature type="binding site" evidence="1">
    <location>
        <begin position="10"/>
        <end position="17"/>
    </location>
    <ligand>
        <name>ATP</name>
        <dbReference type="ChEBI" id="CHEBI:30616"/>
    </ligand>
</feature>
<name>KTHY_ECOSE</name>
<gene>
    <name evidence="1" type="primary">tmk</name>
    <name type="ordered locus">ECSE_1162</name>
</gene>
<proteinExistence type="inferred from homology"/>
<dbReference type="EC" id="2.7.4.9" evidence="1"/>
<dbReference type="EMBL" id="AP009240">
    <property type="protein sequence ID" value="BAG76686.1"/>
    <property type="molecule type" value="Genomic_DNA"/>
</dbReference>
<dbReference type="RefSeq" id="WP_001257000.1">
    <property type="nucleotide sequence ID" value="NC_011415.1"/>
</dbReference>
<dbReference type="SMR" id="B6I9H5"/>
<dbReference type="GeneID" id="93776310"/>
<dbReference type="KEGG" id="ecy:ECSE_1162"/>
<dbReference type="HOGENOM" id="CLU_049131_0_1_6"/>
<dbReference type="Proteomes" id="UP000008199">
    <property type="component" value="Chromosome"/>
</dbReference>
<dbReference type="GO" id="GO:0005829">
    <property type="term" value="C:cytosol"/>
    <property type="evidence" value="ECO:0007669"/>
    <property type="project" value="TreeGrafter"/>
</dbReference>
<dbReference type="GO" id="GO:0005524">
    <property type="term" value="F:ATP binding"/>
    <property type="evidence" value="ECO:0007669"/>
    <property type="project" value="UniProtKB-UniRule"/>
</dbReference>
<dbReference type="GO" id="GO:0004798">
    <property type="term" value="F:dTMP kinase activity"/>
    <property type="evidence" value="ECO:0007669"/>
    <property type="project" value="UniProtKB-UniRule"/>
</dbReference>
<dbReference type="GO" id="GO:0006233">
    <property type="term" value="P:dTDP biosynthetic process"/>
    <property type="evidence" value="ECO:0007669"/>
    <property type="project" value="InterPro"/>
</dbReference>
<dbReference type="GO" id="GO:0006235">
    <property type="term" value="P:dTTP biosynthetic process"/>
    <property type="evidence" value="ECO:0007669"/>
    <property type="project" value="UniProtKB-UniRule"/>
</dbReference>
<dbReference type="GO" id="GO:0006227">
    <property type="term" value="P:dUDP biosynthetic process"/>
    <property type="evidence" value="ECO:0007669"/>
    <property type="project" value="TreeGrafter"/>
</dbReference>
<dbReference type="CDD" id="cd01672">
    <property type="entry name" value="TMPK"/>
    <property type="match status" value="1"/>
</dbReference>
<dbReference type="FunFam" id="3.40.50.300:FF:000321">
    <property type="entry name" value="Thymidylate kinase"/>
    <property type="match status" value="1"/>
</dbReference>
<dbReference type="Gene3D" id="3.40.50.300">
    <property type="entry name" value="P-loop containing nucleotide triphosphate hydrolases"/>
    <property type="match status" value="1"/>
</dbReference>
<dbReference type="HAMAP" id="MF_00165">
    <property type="entry name" value="Thymidylate_kinase"/>
    <property type="match status" value="1"/>
</dbReference>
<dbReference type="InterPro" id="IPR027417">
    <property type="entry name" value="P-loop_NTPase"/>
</dbReference>
<dbReference type="InterPro" id="IPR039430">
    <property type="entry name" value="Thymidylate_kin-like_dom"/>
</dbReference>
<dbReference type="InterPro" id="IPR018095">
    <property type="entry name" value="Thymidylate_kin_CS"/>
</dbReference>
<dbReference type="InterPro" id="IPR018094">
    <property type="entry name" value="Thymidylate_kinase"/>
</dbReference>
<dbReference type="NCBIfam" id="TIGR00041">
    <property type="entry name" value="DTMP_kinase"/>
    <property type="match status" value="1"/>
</dbReference>
<dbReference type="PANTHER" id="PTHR10344">
    <property type="entry name" value="THYMIDYLATE KINASE"/>
    <property type="match status" value="1"/>
</dbReference>
<dbReference type="PANTHER" id="PTHR10344:SF4">
    <property type="entry name" value="UMP-CMP KINASE 2, MITOCHONDRIAL"/>
    <property type="match status" value="1"/>
</dbReference>
<dbReference type="Pfam" id="PF02223">
    <property type="entry name" value="Thymidylate_kin"/>
    <property type="match status" value="1"/>
</dbReference>
<dbReference type="SUPFAM" id="SSF52540">
    <property type="entry name" value="P-loop containing nucleoside triphosphate hydrolases"/>
    <property type="match status" value="1"/>
</dbReference>
<dbReference type="PROSITE" id="PS01331">
    <property type="entry name" value="THYMIDYLATE_KINASE"/>
    <property type="match status" value="1"/>
</dbReference>
<evidence type="ECO:0000255" key="1">
    <source>
        <dbReference type="HAMAP-Rule" id="MF_00165"/>
    </source>
</evidence>
<reference key="1">
    <citation type="journal article" date="2008" name="DNA Res.">
        <title>Complete genome sequence and comparative analysis of the wild-type commensal Escherichia coli strain SE11 isolated from a healthy adult.</title>
        <authorList>
            <person name="Oshima K."/>
            <person name="Toh H."/>
            <person name="Ogura Y."/>
            <person name="Sasamoto H."/>
            <person name="Morita H."/>
            <person name="Park S.-H."/>
            <person name="Ooka T."/>
            <person name="Iyoda S."/>
            <person name="Taylor T.D."/>
            <person name="Hayashi T."/>
            <person name="Itoh K."/>
            <person name="Hattori M."/>
        </authorList>
    </citation>
    <scope>NUCLEOTIDE SEQUENCE [LARGE SCALE GENOMIC DNA]</scope>
    <source>
        <strain>SE11</strain>
    </source>
</reference>
<accession>B6I9H5</accession>